<evidence type="ECO:0000255" key="1">
    <source>
        <dbReference type="HAMAP-Rule" id="MF_00378"/>
    </source>
</evidence>
<proteinExistence type="inferred from homology"/>
<organism>
    <name type="scientific">Shewanella oneidensis (strain ATCC 700550 / JCM 31522 / CIP 106686 / LMG 19005 / NCIMB 14063 / MR-1)</name>
    <dbReference type="NCBI Taxonomy" id="211586"/>
    <lineage>
        <taxon>Bacteria</taxon>
        <taxon>Pseudomonadati</taxon>
        <taxon>Pseudomonadota</taxon>
        <taxon>Gammaproteobacteria</taxon>
        <taxon>Alteromonadales</taxon>
        <taxon>Shewanellaceae</taxon>
        <taxon>Shewanella</taxon>
    </lineage>
</organism>
<reference key="1">
    <citation type="journal article" date="2002" name="Nat. Biotechnol.">
        <title>Genome sequence of the dissimilatory metal ion-reducing bacterium Shewanella oneidensis.</title>
        <authorList>
            <person name="Heidelberg J.F."/>
            <person name="Paulsen I.T."/>
            <person name="Nelson K.E."/>
            <person name="Gaidos E.J."/>
            <person name="Nelson W.C."/>
            <person name="Read T.D."/>
            <person name="Eisen J.A."/>
            <person name="Seshadri R."/>
            <person name="Ward N.L."/>
            <person name="Methe B.A."/>
            <person name="Clayton R.A."/>
            <person name="Meyer T."/>
            <person name="Tsapin A."/>
            <person name="Scott J."/>
            <person name="Beanan M.J."/>
            <person name="Brinkac L.M."/>
            <person name="Daugherty S.C."/>
            <person name="DeBoy R.T."/>
            <person name="Dodson R.J."/>
            <person name="Durkin A.S."/>
            <person name="Haft D.H."/>
            <person name="Kolonay J.F."/>
            <person name="Madupu R."/>
            <person name="Peterson J.D."/>
            <person name="Umayam L.A."/>
            <person name="White O."/>
            <person name="Wolf A.M."/>
            <person name="Vamathevan J.J."/>
            <person name="Weidman J.F."/>
            <person name="Impraim M."/>
            <person name="Lee K."/>
            <person name="Berry K.J."/>
            <person name="Lee C."/>
            <person name="Mueller J."/>
            <person name="Khouri H.M."/>
            <person name="Gill J."/>
            <person name="Utterback T.R."/>
            <person name="McDonald L.A."/>
            <person name="Feldblyum T.V."/>
            <person name="Smith H.O."/>
            <person name="Venter J.C."/>
            <person name="Nealson K.H."/>
            <person name="Fraser C.M."/>
        </authorList>
    </citation>
    <scope>NUCLEOTIDE SEQUENCE [LARGE SCALE GENOMIC DNA]</scope>
    <source>
        <strain>ATCC 700550 / JCM 31522 / CIP 106686 / LMG 19005 / NCIMB 14063 / MR-1</strain>
    </source>
</reference>
<protein>
    <recommendedName>
        <fullName evidence="1">Exodeoxyribonuclease 7 large subunit</fullName>
        <ecNumber evidence="1">3.1.11.6</ecNumber>
    </recommendedName>
    <alternativeName>
        <fullName evidence="1">Exodeoxyribonuclease VII large subunit</fullName>
        <shortName evidence="1">Exonuclease VII large subunit</shortName>
    </alternativeName>
</protein>
<name>EX7L_SHEON</name>
<accession>Q8EC50</accession>
<sequence>MQVPKNNIYTVSRLNGEVRQILEGQLGKIWLNGEISNFSTPSSGHWYLTLKDHFSQIRCAMFKGRNQSVSFKPVNGQQVIVKGAISVYEPRGDYQLLIESMLPAGDGLLAQQFEALKMKLAALGLFAADTKRALPKNIQRIGVITSPTGAAIRDVLHVLARRDPSIEVIIYPTQVQGENADINICQAINIANQRLEVDVLLLTRGGGSLEDLWCFNSEALAHTIYNSALPIVSAVGHEVDTTISDYVADVRAPTPSAGAELLSQDSDNKSQRLATVLARLKQSASHYQLKQERRLSLLEHRLQRLDPKRTLQQFEQRFDEMQLRLEAALTNKLHGLSRRQQQLASRLEQQSPKHKLALEANRLSYLATRLQDAMQDKLSHSGQRIKYVAHQLETVSPLATLSRGYSITTDVNGAVITSASQISLGDTITTQLSNERLMSTVTRLP</sequence>
<feature type="chain" id="PRO_0000197876" description="Exodeoxyribonuclease 7 large subunit">
    <location>
        <begin position="1"/>
        <end position="445"/>
    </location>
</feature>
<gene>
    <name evidence="1" type="primary">xseA</name>
    <name type="ordered locus">SO_3294</name>
</gene>
<comment type="function">
    <text evidence="1">Bidirectionally degrades single-stranded DNA into large acid-insoluble oligonucleotides, which are then degraded further into small acid-soluble oligonucleotides.</text>
</comment>
<comment type="catalytic activity">
    <reaction evidence="1">
        <text>Exonucleolytic cleavage in either 5'- to 3'- or 3'- to 5'-direction to yield nucleoside 5'-phosphates.</text>
        <dbReference type="EC" id="3.1.11.6"/>
    </reaction>
</comment>
<comment type="subunit">
    <text evidence="1">Heterooligomer composed of large and small subunits.</text>
</comment>
<comment type="subcellular location">
    <subcellularLocation>
        <location evidence="1">Cytoplasm</location>
    </subcellularLocation>
</comment>
<comment type="similarity">
    <text evidence="1">Belongs to the XseA family.</text>
</comment>
<dbReference type="EC" id="3.1.11.6" evidence="1"/>
<dbReference type="EMBL" id="AE014299">
    <property type="protein sequence ID" value="AAN56292.1"/>
    <property type="molecule type" value="Genomic_DNA"/>
</dbReference>
<dbReference type="RefSeq" id="NP_718848.1">
    <property type="nucleotide sequence ID" value="NC_004347.2"/>
</dbReference>
<dbReference type="RefSeq" id="WP_011073173.1">
    <property type="nucleotide sequence ID" value="NC_004347.2"/>
</dbReference>
<dbReference type="SMR" id="Q8EC50"/>
<dbReference type="STRING" id="211586.SO_3294"/>
<dbReference type="PaxDb" id="211586-SO_3294"/>
<dbReference type="KEGG" id="son:SO_3294"/>
<dbReference type="PATRIC" id="fig|1028802.3.peg.120"/>
<dbReference type="eggNOG" id="COG1570">
    <property type="taxonomic scope" value="Bacteria"/>
</dbReference>
<dbReference type="HOGENOM" id="CLU_023625_3_1_6"/>
<dbReference type="OrthoDB" id="9802795at2"/>
<dbReference type="PhylomeDB" id="Q8EC50"/>
<dbReference type="BioCyc" id="SONE211586:G1GMP-3069-MONOMER"/>
<dbReference type="Proteomes" id="UP000008186">
    <property type="component" value="Chromosome"/>
</dbReference>
<dbReference type="GO" id="GO:0005737">
    <property type="term" value="C:cytoplasm"/>
    <property type="evidence" value="ECO:0007669"/>
    <property type="project" value="UniProtKB-SubCell"/>
</dbReference>
<dbReference type="GO" id="GO:0009318">
    <property type="term" value="C:exodeoxyribonuclease VII complex"/>
    <property type="evidence" value="ECO:0007669"/>
    <property type="project" value="InterPro"/>
</dbReference>
<dbReference type="GO" id="GO:0008855">
    <property type="term" value="F:exodeoxyribonuclease VII activity"/>
    <property type="evidence" value="ECO:0007669"/>
    <property type="project" value="UniProtKB-UniRule"/>
</dbReference>
<dbReference type="GO" id="GO:0003676">
    <property type="term" value="F:nucleic acid binding"/>
    <property type="evidence" value="ECO:0007669"/>
    <property type="project" value="InterPro"/>
</dbReference>
<dbReference type="GO" id="GO:0006308">
    <property type="term" value="P:DNA catabolic process"/>
    <property type="evidence" value="ECO:0007669"/>
    <property type="project" value="UniProtKB-UniRule"/>
</dbReference>
<dbReference type="CDD" id="cd04489">
    <property type="entry name" value="ExoVII_LU_OBF"/>
    <property type="match status" value="1"/>
</dbReference>
<dbReference type="HAMAP" id="MF_00378">
    <property type="entry name" value="Exonuc_7_L"/>
    <property type="match status" value="1"/>
</dbReference>
<dbReference type="InterPro" id="IPR003753">
    <property type="entry name" value="Exonuc_VII_L"/>
</dbReference>
<dbReference type="InterPro" id="IPR020579">
    <property type="entry name" value="Exonuc_VII_lsu_C"/>
</dbReference>
<dbReference type="InterPro" id="IPR025824">
    <property type="entry name" value="OB-fold_nuc-bd_dom"/>
</dbReference>
<dbReference type="NCBIfam" id="TIGR00237">
    <property type="entry name" value="xseA"/>
    <property type="match status" value="1"/>
</dbReference>
<dbReference type="PANTHER" id="PTHR30008">
    <property type="entry name" value="EXODEOXYRIBONUCLEASE 7 LARGE SUBUNIT"/>
    <property type="match status" value="1"/>
</dbReference>
<dbReference type="PANTHER" id="PTHR30008:SF0">
    <property type="entry name" value="EXODEOXYRIBONUCLEASE 7 LARGE SUBUNIT"/>
    <property type="match status" value="1"/>
</dbReference>
<dbReference type="Pfam" id="PF02601">
    <property type="entry name" value="Exonuc_VII_L"/>
    <property type="match status" value="1"/>
</dbReference>
<dbReference type="Pfam" id="PF13742">
    <property type="entry name" value="tRNA_anti_2"/>
    <property type="match status" value="1"/>
</dbReference>
<keyword id="KW-0963">Cytoplasm</keyword>
<keyword id="KW-0269">Exonuclease</keyword>
<keyword id="KW-0378">Hydrolase</keyword>
<keyword id="KW-0540">Nuclease</keyword>
<keyword id="KW-1185">Reference proteome</keyword>